<name>ASNA_ECO81</name>
<dbReference type="EC" id="6.3.1.1" evidence="1"/>
<dbReference type="EMBL" id="CU928162">
    <property type="protein sequence ID" value="CAR10418.1"/>
    <property type="molecule type" value="Genomic_DNA"/>
</dbReference>
<dbReference type="RefSeq" id="WP_000845104.1">
    <property type="nucleotide sequence ID" value="NC_011745.1"/>
</dbReference>
<dbReference type="SMR" id="B7N247"/>
<dbReference type="KEGG" id="ecq:ECED1_4434"/>
<dbReference type="HOGENOM" id="CLU_071543_0_0_6"/>
<dbReference type="UniPathway" id="UPA00134">
    <property type="reaction ID" value="UER00194"/>
</dbReference>
<dbReference type="Proteomes" id="UP000000748">
    <property type="component" value="Chromosome"/>
</dbReference>
<dbReference type="GO" id="GO:0005829">
    <property type="term" value="C:cytosol"/>
    <property type="evidence" value="ECO:0007669"/>
    <property type="project" value="TreeGrafter"/>
</dbReference>
<dbReference type="GO" id="GO:0004071">
    <property type="term" value="F:aspartate-ammonia ligase activity"/>
    <property type="evidence" value="ECO:0007669"/>
    <property type="project" value="UniProtKB-UniRule"/>
</dbReference>
<dbReference type="GO" id="GO:0005524">
    <property type="term" value="F:ATP binding"/>
    <property type="evidence" value="ECO:0007669"/>
    <property type="project" value="UniProtKB-UniRule"/>
</dbReference>
<dbReference type="GO" id="GO:0070981">
    <property type="term" value="P:L-asparagine biosynthetic process"/>
    <property type="evidence" value="ECO:0007669"/>
    <property type="project" value="UniProtKB-UniRule"/>
</dbReference>
<dbReference type="CDD" id="cd00645">
    <property type="entry name" value="AsnA"/>
    <property type="match status" value="1"/>
</dbReference>
<dbReference type="FunFam" id="3.30.930.10:FF:000025">
    <property type="entry name" value="Aspartate--ammonia ligase"/>
    <property type="match status" value="1"/>
</dbReference>
<dbReference type="Gene3D" id="3.30.930.10">
    <property type="entry name" value="Bira Bifunctional Protein, Domain 2"/>
    <property type="match status" value="1"/>
</dbReference>
<dbReference type="HAMAP" id="MF_00555">
    <property type="entry name" value="AsnA"/>
    <property type="match status" value="1"/>
</dbReference>
<dbReference type="InterPro" id="IPR006195">
    <property type="entry name" value="aa-tRNA-synth_II"/>
</dbReference>
<dbReference type="InterPro" id="IPR045864">
    <property type="entry name" value="aa-tRNA-synth_II/BPL/LPL"/>
</dbReference>
<dbReference type="InterPro" id="IPR004618">
    <property type="entry name" value="AsnA"/>
</dbReference>
<dbReference type="NCBIfam" id="TIGR00669">
    <property type="entry name" value="asnA"/>
    <property type="match status" value="1"/>
</dbReference>
<dbReference type="PANTHER" id="PTHR30073">
    <property type="entry name" value="ASPARTATE--AMMONIA LIGASE"/>
    <property type="match status" value="1"/>
</dbReference>
<dbReference type="PANTHER" id="PTHR30073:SF5">
    <property type="entry name" value="ASPARTATE--AMMONIA LIGASE"/>
    <property type="match status" value="1"/>
</dbReference>
<dbReference type="Pfam" id="PF03590">
    <property type="entry name" value="AsnA"/>
    <property type="match status" value="1"/>
</dbReference>
<dbReference type="PIRSF" id="PIRSF001555">
    <property type="entry name" value="Asp_ammon_ligase"/>
    <property type="match status" value="1"/>
</dbReference>
<dbReference type="SUPFAM" id="SSF55681">
    <property type="entry name" value="Class II aaRS and biotin synthetases"/>
    <property type="match status" value="1"/>
</dbReference>
<dbReference type="PROSITE" id="PS50862">
    <property type="entry name" value="AA_TRNA_LIGASE_II"/>
    <property type="match status" value="1"/>
</dbReference>
<gene>
    <name evidence="1" type="primary">asnA</name>
    <name type="ordered locus">ECED1_4434</name>
</gene>
<reference key="1">
    <citation type="journal article" date="2009" name="PLoS Genet.">
        <title>Organised genome dynamics in the Escherichia coli species results in highly diverse adaptive paths.</title>
        <authorList>
            <person name="Touchon M."/>
            <person name="Hoede C."/>
            <person name="Tenaillon O."/>
            <person name="Barbe V."/>
            <person name="Baeriswyl S."/>
            <person name="Bidet P."/>
            <person name="Bingen E."/>
            <person name="Bonacorsi S."/>
            <person name="Bouchier C."/>
            <person name="Bouvet O."/>
            <person name="Calteau A."/>
            <person name="Chiapello H."/>
            <person name="Clermont O."/>
            <person name="Cruveiller S."/>
            <person name="Danchin A."/>
            <person name="Diard M."/>
            <person name="Dossat C."/>
            <person name="Karoui M.E."/>
            <person name="Frapy E."/>
            <person name="Garry L."/>
            <person name="Ghigo J.M."/>
            <person name="Gilles A.M."/>
            <person name="Johnson J."/>
            <person name="Le Bouguenec C."/>
            <person name="Lescat M."/>
            <person name="Mangenot S."/>
            <person name="Martinez-Jehanne V."/>
            <person name="Matic I."/>
            <person name="Nassif X."/>
            <person name="Oztas S."/>
            <person name="Petit M.A."/>
            <person name="Pichon C."/>
            <person name="Rouy Z."/>
            <person name="Ruf C.S."/>
            <person name="Schneider D."/>
            <person name="Tourret J."/>
            <person name="Vacherie B."/>
            <person name="Vallenet D."/>
            <person name="Medigue C."/>
            <person name="Rocha E.P.C."/>
            <person name="Denamur E."/>
        </authorList>
    </citation>
    <scope>NUCLEOTIDE SEQUENCE [LARGE SCALE GENOMIC DNA]</scope>
    <source>
        <strain>ED1a</strain>
    </source>
</reference>
<sequence length="330" mass="36651">MKTAYIAKQRQISFVKSHFSRQLEERLGLIEVQAPILSRVGDGTQDNLSGCEKAVQVKVKALPDAQFEVVHSLAKWKRQTLGQHDFSAGEGLYTHMKALRPDEDRLSPLHSVYVDQWDWERVMGDGERQFSTLKSTVEAIWAGIKATEAAVSEEFGLAPFLPDQIHFVHSQELLSRYPDLDAKGRERAIAKDLGAVFLVGIGGKLSDGHRHDVRAPDYDDWSTPSELGHAGLNGDILVWNPVLEDAFELSSMGIRVDADTLKHQLALTGDEDRLELEWHQALLRGEMPQTIGGGIGQSRLTMLLLQLPHIGQVQCGVWPAAVRESVPSLL</sequence>
<accession>B7N247</accession>
<proteinExistence type="inferred from homology"/>
<feature type="chain" id="PRO_1000146694" description="Aspartate--ammonia ligase">
    <location>
        <begin position="1"/>
        <end position="330"/>
    </location>
</feature>
<protein>
    <recommendedName>
        <fullName evidence="1">Aspartate--ammonia ligase</fullName>
        <ecNumber evidence="1">6.3.1.1</ecNumber>
    </recommendedName>
    <alternativeName>
        <fullName evidence="1">Asparagine synthetase A</fullName>
    </alternativeName>
</protein>
<organism>
    <name type="scientific">Escherichia coli O81 (strain ED1a)</name>
    <dbReference type="NCBI Taxonomy" id="585397"/>
    <lineage>
        <taxon>Bacteria</taxon>
        <taxon>Pseudomonadati</taxon>
        <taxon>Pseudomonadota</taxon>
        <taxon>Gammaproteobacteria</taxon>
        <taxon>Enterobacterales</taxon>
        <taxon>Enterobacteriaceae</taxon>
        <taxon>Escherichia</taxon>
    </lineage>
</organism>
<keyword id="KW-0028">Amino-acid biosynthesis</keyword>
<keyword id="KW-0061">Asparagine biosynthesis</keyword>
<keyword id="KW-0067">ATP-binding</keyword>
<keyword id="KW-0963">Cytoplasm</keyword>
<keyword id="KW-0436">Ligase</keyword>
<keyword id="KW-0547">Nucleotide-binding</keyword>
<evidence type="ECO:0000255" key="1">
    <source>
        <dbReference type="HAMAP-Rule" id="MF_00555"/>
    </source>
</evidence>
<comment type="catalytic activity">
    <reaction evidence="1">
        <text>L-aspartate + NH4(+) + ATP = L-asparagine + AMP + diphosphate + H(+)</text>
        <dbReference type="Rhea" id="RHEA:11372"/>
        <dbReference type="ChEBI" id="CHEBI:15378"/>
        <dbReference type="ChEBI" id="CHEBI:28938"/>
        <dbReference type="ChEBI" id="CHEBI:29991"/>
        <dbReference type="ChEBI" id="CHEBI:30616"/>
        <dbReference type="ChEBI" id="CHEBI:33019"/>
        <dbReference type="ChEBI" id="CHEBI:58048"/>
        <dbReference type="ChEBI" id="CHEBI:456215"/>
        <dbReference type="EC" id="6.3.1.1"/>
    </reaction>
</comment>
<comment type="pathway">
    <text evidence="1">Amino-acid biosynthesis; L-asparagine biosynthesis; L-asparagine from L-aspartate (ammonia route): step 1/1.</text>
</comment>
<comment type="subcellular location">
    <subcellularLocation>
        <location evidence="1">Cytoplasm</location>
    </subcellularLocation>
</comment>
<comment type="similarity">
    <text evidence="1">Belongs to the class-II aminoacyl-tRNA synthetase family. AsnA subfamily.</text>
</comment>